<keyword id="KW-0067">ATP-binding</keyword>
<keyword id="KW-0223">Dioxygenase</keyword>
<keyword id="KW-0347">Helicase</keyword>
<keyword id="KW-0378">Hydrolase</keyword>
<keyword id="KW-0408">Iron</keyword>
<keyword id="KW-0479">Metal-binding</keyword>
<keyword id="KW-0547">Nucleotide-binding</keyword>
<keyword id="KW-0548">Nucleotidyltransferase</keyword>
<keyword id="KW-0560">Oxidoreductase</keyword>
<keyword id="KW-1185">Reference proteome</keyword>
<keyword id="KW-0696">RNA-directed RNA polymerase</keyword>
<keyword id="KW-0808">Transferase</keyword>
<keyword id="KW-0693">Viral RNA replication</keyword>
<evidence type="ECO:0000255" key="1">
    <source>
        <dbReference type="PROSITE-ProRule" id="PRU00539"/>
    </source>
</evidence>
<evidence type="ECO:0000255" key="2">
    <source>
        <dbReference type="PROSITE-ProRule" id="PRU00805"/>
    </source>
</evidence>
<evidence type="ECO:0000255" key="3">
    <source>
        <dbReference type="PROSITE-ProRule" id="PRU01079"/>
    </source>
</evidence>
<evidence type="ECO:0000256" key="4">
    <source>
        <dbReference type="SAM" id="MobiDB-lite"/>
    </source>
</evidence>
<evidence type="ECO:0000305" key="5"/>
<sequence>MTTLALNLAQYNDPITKGIIAQESLRRVRPDLKAVVNVNPYAIPTSAALVLEKLGIGTHPMSLAVHPHAPCKAIENQILNTVGHLLPKEQPVTFMAMKKSKLNMLRRHPSRADTFINPIYHPRDNVRYGLDPDPDQDASITASFLEVKTSTAFMQDTLHYLTPEDLLDIFETSPKLENLIASFVLPVEATRNMKSLYPDLYSIHYTHGGFQWAPSGHLGDAYFHEPWQLYWLRCGSLTRLIEEETTTTVQPPPGFEGEAYTRVRKEVRELKIYAERVTSIGAHHLFIFSRNAKATPRVRSYSQNGKWVTLPRIFRPVSHNVQTPLKQEVANSLMLYTYAVRPSLKDVAAKVRQKFDEKDLAEHSPLEITHLINYIYYIDQRAYLTNDDDILSDNLLKRWIFTPIQAAYKKAKGFLLGPDDFQKLLKALEWQPVTFDYAVDHYKSNPWRIHASRTGAKMRQLKNFLSRTTGLCEAVEDDALEGSELLKELEGNMWFRNPSEVEKEVFDAIVADLPPDSQRSELILEDPNSNARDYLPIQQDQPSVTQGPDEAAQTQTPTATSMVTNSVAARMPPPVPRTLREHHEQFPTTVRASFEQPSSTRAPETSENNTPAESVTPSPRAIYVGDFAIMDANASTSRASSPSPRRTVVSPRQPEAQNETLGRQIVSRVSPAHGCQMSPYAAQLAHQLSEQTAYTDVIGQRMVAFYSQHSRSYKYGRHEHRSQSWLPVIDSLQVALGLDESYDHCLIQRYRKHARVGLHADDEECYEPDSTIVTLNLYGNADFLIERNTDKASETITLQHNDMLFMPSGMQVTHRHAVCSLYEGRVSITFRNKTKDYLRKSAPDMNPVEQPGASAGQLTGPLDHRPEELPWEHWIPRLNRLGFTGLQKQTDPEGKLIYPITEIRQDMVYVPFPNCCPGPLRKDLEAMGRRPVRYTVDTGRALTLASDIKNNRVGALLQNADLTWKTLLVEYCRMEPTSVPMTVIHGAGGSGKSKLLQDHLNRAELNVVIIVPTRVLQQDWRNKMTEFPSFLVQTYEAAMMESAPQMVVFDDYGKLPHGYIDLFCQFHPSVEYVILTGDARQSTYYEYNSDAGIRNLPTNIEVFKQYCGYYINCTHRNKQDLANMLGVYSEKMGSTHFTFGNTCETGSLLLVPSGTQKTVMGEAGHKTETYAGCQGITADKVQIMIDHDTHKSADSHMYTALSRATEHIHFYNSIAGLNTARFHAKLNLTPYLKTFIQVITERAAAETEPAEYTVQAPTARTHIPVENCSTFLEKDLEEQRAKEDREVYTQAGATNVFQTNSPIVQCFQHQQPKDGALSIITHAKRLQYASAEANQAEYRAKLQIGAALWENFKTAMEIPDEPVPFIRDLWEQSEAEVLSTYLSKSEMAIKNGKNRQDPDWQDERMFVYLKAQWVTKASKFNLPTAKAGQTISAFKQAVVMKFGAMARYLRRITPKPDNIRINCEMQPQDISKWALGLDSHNRPTKQKWNFERPAFASDFEAFDQSQDGAMLHFEALWARHFNVPSSLIEEYLFLKMHAQAPKGYLTIMRLTGEGPTFDANTACSIAYNHTRYEIPKSCMQLYAGDDMLLDQVPVEKTGFKNIAAGLKLTAKTEIFEQKRGKWGEFCSWWMTPYGLVKDPITLYHRILLASEIGDLSKKIDAYAIEAEPAYALQGRLFDCFNEEQMTAHYGTIRRLIIEGKTNFSLDDQAPRHQDLQGILNCMDAKFMYH</sequence>
<protein>
    <recommendedName>
        <fullName>RNA-directed RNA polymerase</fullName>
        <ecNumber>2.7.7.48</ecNumber>
    </recommendedName>
    <domain>
        <recommendedName>
            <fullName>Helicase</fullName>
            <ecNumber>3.6.4.13</ecNumber>
        </recommendedName>
    </domain>
</protein>
<gene>
    <name type="primary">ORF1</name>
</gene>
<feature type="chain" id="PRO_0000401073" description="RNA-directed RNA polymerase">
    <location>
        <begin position="1"/>
        <end position="1729"/>
    </location>
</feature>
<feature type="domain" description="Alphavirus-like MT" evidence="3">
    <location>
        <begin position="59"/>
        <end position="232"/>
    </location>
</feature>
<feature type="domain" description="Fe2OG dioxygenase" evidence="2">
    <location>
        <begin position="741"/>
        <end position="834"/>
    </location>
</feature>
<feature type="domain" description="(+)RNA virus helicase ATP-binding">
    <location>
        <begin position="957"/>
        <end position="1111"/>
    </location>
</feature>
<feature type="domain" description="(+)RNA virus helicase C-terminal">
    <location>
        <begin position="1112"/>
        <end position="1247"/>
    </location>
</feature>
<feature type="domain" description="RdRp catalytic" evidence="1">
    <location>
        <begin position="1492"/>
        <end position="1599"/>
    </location>
</feature>
<feature type="region of interest" description="Disordered" evidence="4">
    <location>
        <begin position="528"/>
        <end position="619"/>
    </location>
</feature>
<feature type="region of interest" description="Disordered" evidence="4">
    <location>
        <begin position="635"/>
        <end position="663"/>
    </location>
</feature>
<feature type="region of interest" description="Disordered" evidence="4">
    <location>
        <begin position="841"/>
        <end position="862"/>
    </location>
</feature>
<feature type="compositionally biased region" description="Polar residues" evidence="4">
    <location>
        <begin position="538"/>
        <end position="567"/>
    </location>
</feature>
<feature type="compositionally biased region" description="Polar residues" evidence="4">
    <location>
        <begin position="586"/>
        <end position="617"/>
    </location>
</feature>
<feature type="compositionally biased region" description="Low complexity" evidence="4">
    <location>
        <begin position="635"/>
        <end position="652"/>
    </location>
</feature>
<feature type="binding site" evidence="2">
    <location>
        <position position="759"/>
    </location>
    <ligand>
        <name>Fe cation</name>
        <dbReference type="ChEBI" id="CHEBI:24875"/>
    </ligand>
</feature>
<feature type="binding site" evidence="2">
    <location>
        <position position="761"/>
    </location>
    <ligand>
        <name>Fe cation</name>
        <dbReference type="ChEBI" id="CHEBI:24875"/>
    </ligand>
</feature>
<feature type="binding site" evidence="2">
    <location>
        <position position="816"/>
    </location>
    <ligand>
        <name>Fe cation</name>
        <dbReference type="ChEBI" id="CHEBI:24875"/>
    </ligand>
</feature>
<feature type="binding site" evidence="2">
    <location>
        <position position="825"/>
    </location>
    <ligand>
        <name>2-oxoglutarate</name>
        <dbReference type="ChEBI" id="CHEBI:16810"/>
    </ligand>
</feature>
<accession>B1PS76</accession>
<proteinExistence type="inferred from homology"/>
<organism>
    <name type="scientific">Lolium latent virus (isolate Lolium/USA/US1/-)</name>
    <name type="common">LoLV</name>
    <dbReference type="NCBI Taxonomy" id="686945"/>
    <lineage>
        <taxon>Viruses</taxon>
        <taxon>Riboviria</taxon>
        <taxon>Orthornavirae</taxon>
        <taxon>Kitrinoviricota</taxon>
        <taxon>Alsuviricetes</taxon>
        <taxon>Tymovirales</taxon>
        <taxon>Alphaflexiviridae</taxon>
        <taxon>Lolavirus</taxon>
        <taxon>Lolium latent virus</taxon>
    </lineage>
</organism>
<organismHost>
    <name type="scientific">Lolium multiflorum x Lolium perenne</name>
    <dbReference type="NCBI Taxonomy" id="480553"/>
</organismHost>
<comment type="function">
    <text evidence="5">RNA replication. The central part of this protein possibly functions as an ATP-binding helicase (Probable).</text>
</comment>
<comment type="catalytic activity">
    <reaction evidence="1">
        <text>RNA(n) + a ribonucleoside 5'-triphosphate = RNA(n+1) + diphosphate</text>
        <dbReference type="Rhea" id="RHEA:21248"/>
        <dbReference type="Rhea" id="RHEA-COMP:14527"/>
        <dbReference type="Rhea" id="RHEA-COMP:17342"/>
        <dbReference type="ChEBI" id="CHEBI:33019"/>
        <dbReference type="ChEBI" id="CHEBI:61557"/>
        <dbReference type="ChEBI" id="CHEBI:140395"/>
        <dbReference type="EC" id="2.7.7.48"/>
    </reaction>
</comment>
<comment type="catalytic activity">
    <reaction>
        <text>ATP + H2O = ADP + phosphate + H(+)</text>
        <dbReference type="Rhea" id="RHEA:13065"/>
        <dbReference type="ChEBI" id="CHEBI:15377"/>
        <dbReference type="ChEBI" id="CHEBI:15378"/>
        <dbReference type="ChEBI" id="CHEBI:30616"/>
        <dbReference type="ChEBI" id="CHEBI:43474"/>
        <dbReference type="ChEBI" id="CHEBI:456216"/>
        <dbReference type="EC" id="3.6.4.13"/>
    </reaction>
</comment>
<comment type="cofactor">
    <cofactor evidence="2">
        <name>Fe(2+)</name>
        <dbReference type="ChEBI" id="CHEBI:29033"/>
    </cofactor>
    <text evidence="2">Binds 1 Fe(2+) ion per subunit.</text>
</comment>
<comment type="similarity">
    <text evidence="5">Belongs to the potexvirus/carlavirus RNA replication protein family.</text>
</comment>
<dbReference type="EC" id="2.7.7.48"/>
<dbReference type="EC" id="3.6.4.13"/>
<dbReference type="EMBL" id="EU489641">
    <property type="protein sequence ID" value="ACA53374.1"/>
    <property type="molecule type" value="Genomic_RNA"/>
</dbReference>
<dbReference type="RefSeq" id="YP_001718499.1">
    <property type="nucleotide sequence ID" value="NC_010434.1"/>
</dbReference>
<dbReference type="KEGG" id="vg:6000098"/>
<dbReference type="Proteomes" id="UP000008689">
    <property type="component" value="Segment"/>
</dbReference>
<dbReference type="GO" id="GO:0005524">
    <property type="term" value="F:ATP binding"/>
    <property type="evidence" value="ECO:0007669"/>
    <property type="project" value="UniProtKB-KW"/>
</dbReference>
<dbReference type="GO" id="GO:0016887">
    <property type="term" value="F:ATP hydrolysis activity"/>
    <property type="evidence" value="ECO:0007669"/>
    <property type="project" value="RHEA"/>
</dbReference>
<dbReference type="GO" id="GO:0051213">
    <property type="term" value="F:dioxygenase activity"/>
    <property type="evidence" value="ECO:0007669"/>
    <property type="project" value="UniProtKB-KW"/>
</dbReference>
<dbReference type="GO" id="GO:0046872">
    <property type="term" value="F:metal ion binding"/>
    <property type="evidence" value="ECO:0007669"/>
    <property type="project" value="UniProtKB-KW"/>
</dbReference>
<dbReference type="GO" id="GO:0008174">
    <property type="term" value="F:mRNA methyltransferase activity"/>
    <property type="evidence" value="ECO:0007669"/>
    <property type="project" value="InterPro"/>
</dbReference>
<dbReference type="GO" id="GO:0003723">
    <property type="term" value="F:RNA binding"/>
    <property type="evidence" value="ECO:0007669"/>
    <property type="project" value="InterPro"/>
</dbReference>
<dbReference type="GO" id="GO:0003724">
    <property type="term" value="F:RNA helicase activity"/>
    <property type="evidence" value="ECO:0007669"/>
    <property type="project" value="UniProtKB-EC"/>
</dbReference>
<dbReference type="GO" id="GO:0003968">
    <property type="term" value="F:RNA-directed RNA polymerase activity"/>
    <property type="evidence" value="ECO:0007669"/>
    <property type="project" value="UniProtKB-KW"/>
</dbReference>
<dbReference type="GO" id="GO:0006351">
    <property type="term" value="P:DNA-templated transcription"/>
    <property type="evidence" value="ECO:0007669"/>
    <property type="project" value="InterPro"/>
</dbReference>
<dbReference type="GO" id="GO:0016556">
    <property type="term" value="P:mRNA modification"/>
    <property type="evidence" value="ECO:0007669"/>
    <property type="project" value="InterPro"/>
</dbReference>
<dbReference type="GO" id="GO:0006396">
    <property type="term" value="P:RNA processing"/>
    <property type="evidence" value="ECO:0007669"/>
    <property type="project" value="InterPro"/>
</dbReference>
<dbReference type="GO" id="GO:0039694">
    <property type="term" value="P:viral RNA genome replication"/>
    <property type="evidence" value="ECO:0007669"/>
    <property type="project" value="InterPro"/>
</dbReference>
<dbReference type="CDD" id="cd23246">
    <property type="entry name" value="Alphaflexiviridae_RdRp"/>
    <property type="match status" value="1"/>
</dbReference>
<dbReference type="Gene3D" id="2.60.120.590">
    <property type="entry name" value="Alpha-ketoglutarate-dependent dioxygenase AlkB-like"/>
    <property type="match status" value="1"/>
</dbReference>
<dbReference type="Gene3D" id="3.40.50.300">
    <property type="entry name" value="P-loop containing nucleotide triphosphate hydrolases"/>
    <property type="match status" value="1"/>
</dbReference>
<dbReference type="InterPro" id="IPR027351">
    <property type="entry name" value="(+)RNA_virus_helicase_core_dom"/>
</dbReference>
<dbReference type="InterPro" id="IPR027450">
    <property type="entry name" value="AlkB-like"/>
</dbReference>
<dbReference type="InterPro" id="IPR037151">
    <property type="entry name" value="AlkB-like_sf"/>
</dbReference>
<dbReference type="InterPro" id="IPR002588">
    <property type="entry name" value="Alphavirus-like_MT_dom"/>
</dbReference>
<dbReference type="InterPro" id="IPR043502">
    <property type="entry name" value="DNA/RNA_pol_sf"/>
</dbReference>
<dbReference type="InterPro" id="IPR005123">
    <property type="entry name" value="Oxoglu/Fe-dep_dioxygenase_dom"/>
</dbReference>
<dbReference type="InterPro" id="IPR027417">
    <property type="entry name" value="P-loop_NTPase"/>
</dbReference>
<dbReference type="InterPro" id="IPR001788">
    <property type="entry name" value="RNA-dep_RNA_pol_alsuvir"/>
</dbReference>
<dbReference type="InterPro" id="IPR007094">
    <property type="entry name" value="RNA-dir_pol_PSvirus"/>
</dbReference>
<dbReference type="Pfam" id="PF13532">
    <property type="entry name" value="2OG-FeII_Oxy_2"/>
    <property type="match status" value="1"/>
</dbReference>
<dbReference type="Pfam" id="PF00978">
    <property type="entry name" value="RdRP_2"/>
    <property type="match status" value="1"/>
</dbReference>
<dbReference type="Pfam" id="PF01443">
    <property type="entry name" value="Viral_helicase1"/>
    <property type="match status" value="1"/>
</dbReference>
<dbReference type="Pfam" id="PF01660">
    <property type="entry name" value="Vmethyltransf"/>
    <property type="match status" value="1"/>
</dbReference>
<dbReference type="SUPFAM" id="SSF51197">
    <property type="entry name" value="Clavaminate synthase-like"/>
    <property type="match status" value="1"/>
</dbReference>
<dbReference type="SUPFAM" id="SSF56672">
    <property type="entry name" value="DNA/RNA polymerases"/>
    <property type="match status" value="1"/>
</dbReference>
<dbReference type="SUPFAM" id="SSF52540">
    <property type="entry name" value="P-loop containing nucleoside triphosphate hydrolases"/>
    <property type="match status" value="1"/>
</dbReference>
<dbReference type="PROSITE" id="PS51743">
    <property type="entry name" value="ALPHAVIRUS_MT"/>
    <property type="match status" value="1"/>
</dbReference>
<dbReference type="PROSITE" id="PS51471">
    <property type="entry name" value="FE2OG_OXY"/>
    <property type="match status" value="1"/>
</dbReference>
<dbReference type="PROSITE" id="PS51657">
    <property type="entry name" value="PSRV_HELICASE"/>
    <property type="match status" value="1"/>
</dbReference>
<dbReference type="PROSITE" id="PS50507">
    <property type="entry name" value="RDRP_SSRNA_POS"/>
    <property type="match status" value="1"/>
</dbReference>
<reference key="1">
    <citation type="submission" date="2008-03" db="EMBL/GenBank/DDBJ databases">
        <title>Molecular characterization of Lolium latent virus, proposed type member of a new genus in the family Flexiviridae.</title>
        <authorList>
            <person name="Vaira A.M.V."/>
            <person name="Maroon-Lango C.J."/>
            <person name="Hammond J."/>
        </authorList>
    </citation>
    <scope>NUCLEOTIDE SEQUENCE [GENOMIC RNA]</scope>
</reference>
<name>RDRP_LOLV</name>